<sequence>MRFDEAYSGKVFIKSHPSFEESEVVIYGMPMDWTVSYRPGSRFGPARIREVSIGLEEYSPYLDRELEEVKYFDAGDIPLPFGNAQRSLDMIEEYVSKLLDAGKFPLGLGGEHLVSWPIFKAMAKKYPDLAIIHMDAHTDLRESYEGEPLSHSTPIRKVCDLIGPENVYSFGIRSGMKEEFEWAKEVGMNLYKFDVLEPLKEVLPKLEGRPVYVTIDIDVLDPAHAPGTGTLEAGGITSKELLDSIVAIANSNINVVGADLVEVAPVYDHSDQTPVAASKFVREMLLGWVK</sequence>
<proteinExistence type="inferred from homology"/>
<feature type="chain" id="PRO_0000173725" description="Agmatinase">
    <location>
        <begin position="1"/>
        <end position="290"/>
    </location>
</feature>
<feature type="binding site" evidence="2">
    <location>
        <position position="112"/>
    </location>
    <ligand>
        <name>Mn(2+)</name>
        <dbReference type="ChEBI" id="CHEBI:29035"/>
    </ligand>
</feature>
<feature type="binding site" evidence="2">
    <location>
        <position position="135"/>
    </location>
    <ligand>
        <name>Mn(2+)</name>
        <dbReference type="ChEBI" id="CHEBI:29035"/>
    </ligand>
</feature>
<feature type="binding site" evidence="2">
    <location>
        <position position="137"/>
    </location>
    <ligand>
        <name>Mn(2+)</name>
        <dbReference type="ChEBI" id="CHEBI:29035"/>
    </ligand>
</feature>
<feature type="binding site" evidence="2">
    <location>
        <position position="139"/>
    </location>
    <ligand>
        <name>Mn(2+)</name>
        <dbReference type="ChEBI" id="CHEBI:29035"/>
    </ligand>
</feature>
<feature type="binding site" evidence="2">
    <location>
        <position position="216"/>
    </location>
    <ligand>
        <name>Mn(2+)</name>
        <dbReference type="ChEBI" id="CHEBI:29035"/>
    </ligand>
</feature>
<feature type="binding site" evidence="2">
    <location>
        <position position="218"/>
    </location>
    <ligand>
        <name>Mn(2+)</name>
        <dbReference type="ChEBI" id="CHEBI:29035"/>
    </ligand>
</feature>
<reference key="1">
    <citation type="journal article" date="2003" name="Nature">
        <title>The genome sequence of Bacillus anthracis Ames and comparison to closely related bacteria.</title>
        <authorList>
            <person name="Read T.D."/>
            <person name="Peterson S.N."/>
            <person name="Tourasse N.J."/>
            <person name="Baillie L.W."/>
            <person name="Paulsen I.T."/>
            <person name="Nelson K.E."/>
            <person name="Tettelin H."/>
            <person name="Fouts D.E."/>
            <person name="Eisen J.A."/>
            <person name="Gill S.R."/>
            <person name="Holtzapple E.K."/>
            <person name="Okstad O.A."/>
            <person name="Helgason E."/>
            <person name="Rilstone J."/>
            <person name="Wu M."/>
            <person name="Kolonay J.F."/>
            <person name="Beanan M.J."/>
            <person name="Dodson R.J."/>
            <person name="Brinkac L.M."/>
            <person name="Gwinn M.L."/>
            <person name="DeBoy R.T."/>
            <person name="Madpu R."/>
            <person name="Daugherty S.C."/>
            <person name="Durkin A.S."/>
            <person name="Haft D.H."/>
            <person name="Nelson W.C."/>
            <person name="Peterson J.D."/>
            <person name="Pop M."/>
            <person name="Khouri H.M."/>
            <person name="Radune D."/>
            <person name="Benton J.L."/>
            <person name="Mahamoud Y."/>
            <person name="Jiang L."/>
            <person name="Hance I.R."/>
            <person name="Weidman J.F."/>
            <person name="Berry K.J."/>
            <person name="Plaut R.D."/>
            <person name="Wolf A.M."/>
            <person name="Watkins K.L."/>
            <person name="Nierman W.C."/>
            <person name="Hazen A."/>
            <person name="Cline R.T."/>
            <person name="Redmond C."/>
            <person name="Thwaite J.E."/>
            <person name="White O."/>
            <person name="Salzberg S.L."/>
            <person name="Thomason B."/>
            <person name="Friedlander A.M."/>
            <person name="Koehler T.M."/>
            <person name="Hanna P.C."/>
            <person name="Kolstoe A.-B."/>
            <person name="Fraser C.M."/>
        </authorList>
    </citation>
    <scope>NUCLEOTIDE SEQUENCE [LARGE SCALE GENOMIC DNA]</scope>
    <source>
        <strain>Ames / isolate Porton</strain>
    </source>
</reference>
<reference key="2">
    <citation type="journal article" date="2009" name="J. Bacteriol.">
        <title>The complete genome sequence of Bacillus anthracis Ames 'Ancestor'.</title>
        <authorList>
            <person name="Ravel J."/>
            <person name="Jiang L."/>
            <person name="Stanley S.T."/>
            <person name="Wilson M.R."/>
            <person name="Decker R.S."/>
            <person name="Read T.D."/>
            <person name="Worsham P."/>
            <person name="Keim P.S."/>
            <person name="Salzberg S.L."/>
            <person name="Fraser-Liggett C.M."/>
            <person name="Rasko D.A."/>
        </authorList>
    </citation>
    <scope>NUCLEOTIDE SEQUENCE [LARGE SCALE GENOMIC DNA]</scope>
    <source>
        <strain>Ames ancestor</strain>
    </source>
</reference>
<reference key="3">
    <citation type="submission" date="2004-01" db="EMBL/GenBank/DDBJ databases">
        <title>Complete genome sequence of Bacillus anthracis Sterne.</title>
        <authorList>
            <person name="Brettin T.S."/>
            <person name="Bruce D."/>
            <person name="Challacombe J.F."/>
            <person name="Gilna P."/>
            <person name="Han C."/>
            <person name="Hill K."/>
            <person name="Hitchcock P."/>
            <person name="Jackson P."/>
            <person name="Keim P."/>
            <person name="Longmire J."/>
            <person name="Lucas S."/>
            <person name="Okinaka R."/>
            <person name="Richardson P."/>
            <person name="Rubin E."/>
            <person name="Tice H."/>
        </authorList>
    </citation>
    <scope>NUCLEOTIDE SEQUENCE [LARGE SCALE GENOMIC DNA]</scope>
    <source>
        <strain>Sterne</strain>
    </source>
</reference>
<organism>
    <name type="scientific">Bacillus anthracis</name>
    <dbReference type="NCBI Taxonomy" id="1392"/>
    <lineage>
        <taxon>Bacteria</taxon>
        <taxon>Bacillati</taxon>
        <taxon>Bacillota</taxon>
        <taxon>Bacilli</taxon>
        <taxon>Bacillales</taxon>
        <taxon>Bacillaceae</taxon>
        <taxon>Bacillus</taxon>
        <taxon>Bacillus cereus group</taxon>
    </lineage>
</organism>
<accession>Q81JT1</accession>
<accession>Q6HQD1</accession>
<accession>Q6KJQ8</accession>
<name>SPEB_BACAN</name>
<protein>
    <recommendedName>
        <fullName>Agmatinase</fullName>
        <ecNumber>3.5.3.11</ecNumber>
    </recommendedName>
    <alternativeName>
        <fullName>Agmatine ureohydrolase</fullName>
        <shortName>AUH</shortName>
    </alternativeName>
</protein>
<comment type="function">
    <text evidence="1">Catalyzes the formation of putrescine from agmatine.</text>
</comment>
<comment type="catalytic activity">
    <reaction>
        <text>agmatine + H2O = urea + putrescine</text>
        <dbReference type="Rhea" id="RHEA:13929"/>
        <dbReference type="ChEBI" id="CHEBI:15377"/>
        <dbReference type="ChEBI" id="CHEBI:16199"/>
        <dbReference type="ChEBI" id="CHEBI:58145"/>
        <dbReference type="ChEBI" id="CHEBI:326268"/>
        <dbReference type="EC" id="3.5.3.11"/>
    </reaction>
</comment>
<comment type="cofactor">
    <cofactor evidence="2">
        <name>Mn(2+)</name>
        <dbReference type="ChEBI" id="CHEBI:29035"/>
    </cofactor>
</comment>
<comment type="pathway">
    <text>Amine and polyamine biosynthesis; putrescine biosynthesis via agmatine pathway; putrescine from agmatine: step 1/1.</text>
</comment>
<comment type="similarity">
    <text evidence="2">Belongs to the arginase family. Agmatinase subfamily.</text>
</comment>
<evidence type="ECO:0000250" key="1"/>
<evidence type="ECO:0000255" key="2">
    <source>
        <dbReference type="PROSITE-ProRule" id="PRU00742"/>
    </source>
</evidence>
<gene>
    <name type="primary">speB</name>
    <name type="ordered locus">BA_5617</name>
    <name type="ordered locus">GBAA_5617</name>
    <name type="ordered locus">BAS5218</name>
</gene>
<keyword id="KW-0378">Hydrolase</keyword>
<keyword id="KW-0464">Manganese</keyword>
<keyword id="KW-0479">Metal-binding</keyword>
<keyword id="KW-0620">Polyamine biosynthesis</keyword>
<keyword id="KW-0661">Putrescine biosynthesis</keyword>
<keyword id="KW-1185">Reference proteome</keyword>
<keyword id="KW-0745">Spermidine biosynthesis</keyword>
<dbReference type="EC" id="3.5.3.11"/>
<dbReference type="EMBL" id="AE016879">
    <property type="protein sequence ID" value="AAP29255.1"/>
    <property type="molecule type" value="Genomic_DNA"/>
</dbReference>
<dbReference type="EMBL" id="AE017334">
    <property type="protein sequence ID" value="AAT34764.1"/>
    <property type="molecule type" value="Genomic_DNA"/>
</dbReference>
<dbReference type="EMBL" id="AE017225">
    <property type="protein sequence ID" value="AAT57507.1"/>
    <property type="molecule type" value="Genomic_DNA"/>
</dbReference>
<dbReference type="RefSeq" id="NP_847769.1">
    <property type="nucleotide sequence ID" value="NC_003997.3"/>
</dbReference>
<dbReference type="RefSeq" id="WP_001209826.1">
    <property type="nucleotide sequence ID" value="NZ_WXXJ01000017.1"/>
</dbReference>
<dbReference type="RefSeq" id="YP_031457.1">
    <property type="nucleotide sequence ID" value="NC_005945.1"/>
</dbReference>
<dbReference type="SMR" id="Q81JT1"/>
<dbReference type="STRING" id="261594.GBAA_5617"/>
<dbReference type="DNASU" id="1085325"/>
<dbReference type="GeneID" id="45025197"/>
<dbReference type="KEGG" id="ban:BA_5617"/>
<dbReference type="KEGG" id="bar:GBAA_5617"/>
<dbReference type="KEGG" id="bat:BAS5218"/>
<dbReference type="PATRIC" id="fig|198094.11.peg.5575"/>
<dbReference type="eggNOG" id="COG0010">
    <property type="taxonomic scope" value="Bacteria"/>
</dbReference>
<dbReference type="HOGENOM" id="CLU_039478_0_2_9"/>
<dbReference type="OMA" id="YELTTIM"/>
<dbReference type="OrthoDB" id="9788689at2"/>
<dbReference type="UniPathway" id="UPA00534">
    <property type="reaction ID" value="UER00287"/>
</dbReference>
<dbReference type="Proteomes" id="UP000000427">
    <property type="component" value="Chromosome"/>
</dbReference>
<dbReference type="Proteomes" id="UP000000594">
    <property type="component" value="Chromosome"/>
</dbReference>
<dbReference type="GO" id="GO:0008783">
    <property type="term" value="F:agmatinase activity"/>
    <property type="evidence" value="ECO:0007669"/>
    <property type="project" value="UniProtKB-EC"/>
</dbReference>
<dbReference type="GO" id="GO:0046872">
    <property type="term" value="F:metal ion binding"/>
    <property type="evidence" value="ECO:0007669"/>
    <property type="project" value="UniProtKB-KW"/>
</dbReference>
<dbReference type="GO" id="GO:0033389">
    <property type="term" value="P:putrescine biosynthetic process from arginine, via agmatine"/>
    <property type="evidence" value="ECO:0007669"/>
    <property type="project" value="TreeGrafter"/>
</dbReference>
<dbReference type="GO" id="GO:0008295">
    <property type="term" value="P:spermidine biosynthetic process"/>
    <property type="evidence" value="ECO:0007669"/>
    <property type="project" value="UniProtKB-KW"/>
</dbReference>
<dbReference type="CDD" id="cd11593">
    <property type="entry name" value="Agmatinase-like_2"/>
    <property type="match status" value="1"/>
</dbReference>
<dbReference type="FunFam" id="3.40.800.10:FF:000004">
    <property type="entry name" value="Agmatinase"/>
    <property type="match status" value="1"/>
</dbReference>
<dbReference type="Gene3D" id="3.40.800.10">
    <property type="entry name" value="Ureohydrolase domain"/>
    <property type="match status" value="1"/>
</dbReference>
<dbReference type="InterPro" id="IPR005925">
    <property type="entry name" value="Agmatinase-rel"/>
</dbReference>
<dbReference type="InterPro" id="IPR006035">
    <property type="entry name" value="Ureohydrolase"/>
</dbReference>
<dbReference type="InterPro" id="IPR023696">
    <property type="entry name" value="Ureohydrolase_dom_sf"/>
</dbReference>
<dbReference type="InterPro" id="IPR020855">
    <property type="entry name" value="Ureohydrolase_Mn_BS"/>
</dbReference>
<dbReference type="NCBIfam" id="TIGR01230">
    <property type="entry name" value="agmatinase"/>
    <property type="match status" value="1"/>
</dbReference>
<dbReference type="PANTHER" id="PTHR11358">
    <property type="entry name" value="ARGINASE/AGMATINASE"/>
    <property type="match status" value="1"/>
</dbReference>
<dbReference type="PANTHER" id="PTHR11358:SF26">
    <property type="entry name" value="GUANIDINO ACID HYDROLASE, MITOCHONDRIAL"/>
    <property type="match status" value="1"/>
</dbReference>
<dbReference type="Pfam" id="PF00491">
    <property type="entry name" value="Arginase"/>
    <property type="match status" value="1"/>
</dbReference>
<dbReference type="PIRSF" id="PIRSF036979">
    <property type="entry name" value="Arginase"/>
    <property type="match status" value="1"/>
</dbReference>
<dbReference type="SUPFAM" id="SSF52768">
    <property type="entry name" value="Arginase/deacetylase"/>
    <property type="match status" value="1"/>
</dbReference>
<dbReference type="PROSITE" id="PS01053">
    <property type="entry name" value="ARGINASE_1"/>
    <property type="match status" value="1"/>
</dbReference>
<dbReference type="PROSITE" id="PS51409">
    <property type="entry name" value="ARGINASE_2"/>
    <property type="match status" value="1"/>
</dbReference>